<accession>A4W125</accession>
<proteinExistence type="inferred from homology"/>
<comment type="function">
    <text evidence="1">Catalyzes the folate-dependent formation of 5-methyl-uridine at position 54 (M-5-U54) in all tRNAs.</text>
</comment>
<comment type="catalytic activity">
    <reaction evidence="1">
        <text>uridine(54) in tRNA + (6R)-5,10-methylene-5,6,7,8-tetrahydrofolate + NADH + H(+) = 5-methyluridine(54) in tRNA + (6S)-5,6,7,8-tetrahydrofolate + NAD(+)</text>
        <dbReference type="Rhea" id="RHEA:16873"/>
        <dbReference type="Rhea" id="RHEA-COMP:10167"/>
        <dbReference type="Rhea" id="RHEA-COMP:10193"/>
        <dbReference type="ChEBI" id="CHEBI:15378"/>
        <dbReference type="ChEBI" id="CHEBI:15636"/>
        <dbReference type="ChEBI" id="CHEBI:57453"/>
        <dbReference type="ChEBI" id="CHEBI:57540"/>
        <dbReference type="ChEBI" id="CHEBI:57945"/>
        <dbReference type="ChEBI" id="CHEBI:65315"/>
        <dbReference type="ChEBI" id="CHEBI:74447"/>
        <dbReference type="EC" id="2.1.1.74"/>
    </reaction>
</comment>
<comment type="catalytic activity">
    <reaction evidence="1">
        <text>uridine(54) in tRNA + (6R)-5,10-methylene-5,6,7,8-tetrahydrofolate + NADPH + H(+) = 5-methyluridine(54) in tRNA + (6S)-5,6,7,8-tetrahydrofolate + NADP(+)</text>
        <dbReference type="Rhea" id="RHEA:62372"/>
        <dbReference type="Rhea" id="RHEA-COMP:10167"/>
        <dbReference type="Rhea" id="RHEA-COMP:10193"/>
        <dbReference type="ChEBI" id="CHEBI:15378"/>
        <dbReference type="ChEBI" id="CHEBI:15636"/>
        <dbReference type="ChEBI" id="CHEBI:57453"/>
        <dbReference type="ChEBI" id="CHEBI:57783"/>
        <dbReference type="ChEBI" id="CHEBI:58349"/>
        <dbReference type="ChEBI" id="CHEBI:65315"/>
        <dbReference type="ChEBI" id="CHEBI:74447"/>
        <dbReference type="EC" id="2.1.1.74"/>
    </reaction>
</comment>
<comment type="cofactor">
    <cofactor evidence="1">
        <name>FAD</name>
        <dbReference type="ChEBI" id="CHEBI:57692"/>
    </cofactor>
</comment>
<comment type="subcellular location">
    <subcellularLocation>
        <location evidence="1">Cytoplasm</location>
    </subcellularLocation>
</comment>
<comment type="similarity">
    <text evidence="1">Belongs to the MnmG family. TrmFO subfamily.</text>
</comment>
<reference key="1">
    <citation type="journal article" date="2007" name="PLoS ONE">
        <title>A glimpse of streptococcal toxic shock syndrome from comparative genomics of S. suis 2 Chinese isolates.</title>
        <authorList>
            <person name="Chen C."/>
            <person name="Tang J."/>
            <person name="Dong W."/>
            <person name="Wang C."/>
            <person name="Feng Y."/>
            <person name="Wang J."/>
            <person name="Zheng F."/>
            <person name="Pan X."/>
            <person name="Liu D."/>
            <person name="Li M."/>
            <person name="Song Y."/>
            <person name="Zhu X."/>
            <person name="Sun H."/>
            <person name="Feng T."/>
            <person name="Guo Z."/>
            <person name="Ju A."/>
            <person name="Ge J."/>
            <person name="Dong Y."/>
            <person name="Sun W."/>
            <person name="Jiang Y."/>
            <person name="Wang J."/>
            <person name="Yan J."/>
            <person name="Yang H."/>
            <person name="Wang X."/>
            <person name="Gao G.F."/>
            <person name="Yang R."/>
            <person name="Wang J."/>
            <person name="Yu J."/>
        </authorList>
    </citation>
    <scope>NUCLEOTIDE SEQUENCE [LARGE SCALE GENOMIC DNA]</scope>
    <source>
        <strain>98HAH33</strain>
    </source>
</reference>
<protein>
    <recommendedName>
        <fullName evidence="1">Methylenetetrahydrofolate--tRNA-(uracil-5-)-methyltransferase TrmFO</fullName>
        <ecNumber evidence="1">2.1.1.74</ecNumber>
    </recommendedName>
    <alternativeName>
        <fullName evidence="1">Folate-dependent tRNA (uracil-5-)-methyltransferase</fullName>
    </alternativeName>
    <alternativeName>
        <fullName evidence="1">Folate-dependent tRNA(M-5-U54)-methyltransferase</fullName>
    </alternativeName>
</protein>
<evidence type="ECO:0000255" key="1">
    <source>
        <dbReference type="HAMAP-Rule" id="MF_01037"/>
    </source>
</evidence>
<keyword id="KW-0963">Cytoplasm</keyword>
<keyword id="KW-0274">FAD</keyword>
<keyword id="KW-0285">Flavoprotein</keyword>
<keyword id="KW-0489">Methyltransferase</keyword>
<keyword id="KW-0520">NAD</keyword>
<keyword id="KW-0521">NADP</keyword>
<keyword id="KW-0808">Transferase</keyword>
<keyword id="KW-0819">tRNA processing</keyword>
<sequence length="444" mass="49500">MSQTHINVIGAGLAGSEAAYQIAKRGIPVKLYEMRGVKPTPQHKTDKFAELVCSNSFRGDSLTNAVGLLKEEMRRLDSIIMRAGEAHRVPAGGAMAMDRENFSQAVTDEIHNHPLIEVIRGEITEIPEDAITVIATGPLTSDALAEKIHALNGGDGFYFYDAAAPIVDSSTINMDLVYLKSRYDKGEAAYLNAPMNKEQFNAFYEALISAEEAPLNSFEKEKYFEGCMPIEVMAKRGIKTMLYGPMKPVGLEYPEDYKGPRDGEYKTPYAVVQLRQDNAAGSLYNIVGFQTHLKWGEQKRIFQMIPGLENAEFVRYGVMHRNSYMDSPNLLEQTFATKKNPNLFFAGQMTGVEGYVESAASGLVAGINAVRRFHGEEPVIFPQTTAIGALPFYITHTESKHFQPMNVNFGIIKELDGPRIRDKKERYEAIAERSLKDLEEFLTV</sequence>
<name>TRMFO_STRS2</name>
<dbReference type="EC" id="2.1.1.74" evidence="1"/>
<dbReference type="EMBL" id="CP000408">
    <property type="protein sequence ID" value="ABP92064.1"/>
    <property type="molecule type" value="Genomic_DNA"/>
</dbReference>
<dbReference type="SMR" id="A4W125"/>
<dbReference type="KEGG" id="ssv:SSU98_0906"/>
<dbReference type="HOGENOM" id="CLU_033057_1_0_9"/>
<dbReference type="GO" id="GO:0005829">
    <property type="term" value="C:cytosol"/>
    <property type="evidence" value="ECO:0007669"/>
    <property type="project" value="TreeGrafter"/>
</dbReference>
<dbReference type="GO" id="GO:0050660">
    <property type="term" value="F:flavin adenine dinucleotide binding"/>
    <property type="evidence" value="ECO:0007669"/>
    <property type="project" value="UniProtKB-UniRule"/>
</dbReference>
<dbReference type="GO" id="GO:0047151">
    <property type="term" value="F:tRNA (uracil(54)-C5)-methyltransferase activity, 5,10-methylenetetrahydrofolate-dependent"/>
    <property type="evidence" value="ECO:0007669"/>
    <property type="project" value="UniProtKB-UniRule"/>
</dbReference>
<dbReference type="GO" id="GO:0030488">
    <property type="term" value="P:tRNA methylation"/>
    <property type="evidence" value="ECO:0007669"/>
    <property type="project" value="TreeGrafter"/>
</dbReference>
<dbReference type="GO" id="GO:0002098">
    <property type="term" value="P:tRNA wobble uridine modification"/>
    <property type="evidence" value="ECO:0007669"/>
    <property type="project" value="TreeGrafter"/>
</dbReference>
<dbReference type="FunFam" id="3.50.50.60:FF:000035">
    <property type="entry name" value="Methylenetetrahydrofolate--tRNA-(uracil-5-)-methyltransferase TrmFO"/>
    <property type="match status" value="1"/>
</dbReference>
<dbReference type="FunFam" id="3.50.50.60:FF:000040">
    <property type="entry name" value="Methylenetetrahydrofolate--tRNA-(uracil-5-)-methyltransferase TrmFO"/>
    <property type="match status" value="1"/>
</dbReference>
<dbReference type="Gene3D" id="3.50.50.60">
    <property type="entry name" value="FAD/NAD(P)-binding domain"/>
    <property type="match status" value="2"/>
</dbReference>
<dbReference type="HAMAP" id="MF_01037">
    <property type="entry name" value="TrmFO"/>
    <property type="match status" value="1"/>
</dbReference>
<dbReference type="InterPro" id="IPR036188">
    <property type="entry name" value="FAD/NAD-bd_sf"/>
</dbReference>
<dbReference type="InterPro" id="IPR002218">
    <property type="entry name" value="MnmG-rel"/>
</dbReference>
<dbReference type="InterPro" id="IPR020595">
    <property type="entry name" value="MnmG-rel_CS"/>
</dbReference>
<dbReference type="InterPro" id="IPR040131">
    <property type="entry name" value="MnmG_N"/>
</dbReference>
<dbReference type="InterPro" id="IPR004417">
    <property type="entry name" value="TrmFO"/>
</dbReference>
<dbReference type="NCBIfam" id="TIGR00137">
    <property type="entry name" value="gid_trmFO"/>
    <property type="match status" value="1"/>
</dbReference>
<dbReference type="NCBIfam" id="NF003739">
    <property type="entry name" value="PRK05335.1"/>
    <property type="match status" value="1"/>
</dbReference>
<dbReference type="PANTHER" id="PTHR11806">
    <property type="entry name" value="GLUCOSE INHIBITED DIVISION PROTEIN A"/>
    <property type="match status" value="1"/>
</dbReference>
<dbReference type="PANTHER" id="PTHR11806:SF2">
    <property type="entry name" value="METHYLENETETRAHYDROFOLATE--TRNA-(URACIL-5-)-METHYLTRANSFERASE TRMFO"/>
    <property type="match status" value="1"/>
</dbReference>
<dbReference type="Pfam" id="PF01134">
    <property type="entry name" value="GIDA"/>
    <property type="match status" value="1"/>
</dbReference>
<dbReference type="SUPFAM" id="SSF51905">
    <property type="entry name" value="FAD/NAD(P)-binding domain"/>
    <property type="match status" value="1"/>
</dbReference>
<dbReference type="PROSITE" id="PS01281">
    <property type="entry name" value="GIDA_2"/>
    <property type="match status" value="1"/>
</dbReference>
<gene>
    <name evidence="1" type="primary">trmFO</name>
    <name type="synonym">gid</name>
    <name type="ordered locus">SSU98_0906</name>
</gene>
<feature type="chain" id="PRO_1000063937" description="Methylenetetrahydrofolate--tRNA-(uracil-5-)-methyltransferase TrmFO">
    <location>
        <begin position="1"/>
        <end position="444"/>
    </location>
</feature>
<feature type="binding site" evidence="1">
    <location>
        <begin position="10"/>
        <end position="15"/>
    </location>
    <ligand>
        <name>FAD</name>
        <dbReference type="ChEBI" id="CHEBI:57692"/>
    </ligand>
</feature>
<organism>
    <name type="scientific">Streptococcus suis (strain 98HAH33)</name>
    <dbReference type="NCBI Taxonomy" id="391296"/>
    <lineage>
        <taxon>Bacteria</taxon>
        <taxon>Bacillati</taxon>
        <taxon>Bacillota</taxon>
        <taxon>Bacilli</taxon>
        <taxon>Lactobacillales</taxon>
        <taxon>Streptococcaceae</taxon>
        <taxon>Streptococcus</taxon>
    </lineage>
</organism>